<comment type="PTM">
    <text evidence="1">The N-terminus is cleaved by ribosomal processing cysteine protease Prp.</text>
</comment>
<comment type="similarity">
    <text evidence="2">Belongs to the bacterial ribosomal protein bL27 family.</text>
</comment>
<feature type="propeptide" id="PRO_0000459880" evidence="1">
    <location>
        <begin position="1"/>
        <end position="9"/>
    </location>
</feature>
<feature type="chain" id="PRO_1000146521" description="Large ribosomal subunit protein bL27">
    <location>
        <begin position="10"/>
        <end position="93"/>
    </location>
</feature>
<sequence>MIKINLQLFAHKKGVGSSRNGRDSAAKRLGVKRADGQFVLAGNILVRQRGTKIHPGVNVGIGKDDTLFALKDGKVKFARLGRDKKQVMIVTAE</sequence>
<dbReference type="EMBL" id="CP001348">
    <property type="protein sequence ID" value="ACL75676.1"/>
    <property type="molecule type" value="Genomic_DNA"/>
</dbReference>
<dbReference type="RefSeq" id="WP_015924824.1">
    <property type="nucleotide sequence ID" value="NC_011898.1"/>
</dbReference>
<dbReference type="SMR" id="B8I178"/>
<dbReference type="STRING" id="394503.Ccel_1322"/>
<dbReference type="KEGG" id="cce:Ccel_1322"/>
<dbReference type="eggNOG" id="COG0211">
    <property type="taxonomic scope" value="Bacteria"/>
</dbReference>
<dbReference type="HOGENOM" id="CLU_095424_4_0_9"/>
<dbReference type="OrthoDB" id="9803474at2"/>
<dbReference type="Proteomes" id="UP000001349">
    <property type="component" value="Chromosome"/>
</dbReference>
<dbReference type="GO" id="GO:0022625">
    <property type="term" value="C:cytosolic large ribosomal subunit"/>
    <property type="evidence" value="ECO:0007669"/>
    <property type="project" value="TreeGrafter"/>
</dbReference>
<dbReference type="GO" id="GO:0003735">
    <property type="term" value="F:structural constituent of ribosome"/>
    <property type="evidence" value="ECO:0007669"/>
    <property type="project" value="InterPro"/>
</dbReference>
<dbReference type="GO" id="GO:0006412">
    <property type="term" value="P:translation"/>
    <property type="evidence" value="ECO:0007669"/>
    <property type="project" value="UniProtKB-UniRule"/>
</dbReference>
<dbReference type="FunFam" id="2.40.50.100:FF:000004">
    <property type="entry name" value="50S ribosomal protein L27"/>
    <property type="match status" value="1"/>
</dbReference>
<dbReference type="Gene3D" id="2.40.50.100">
    <property type="match status" value="1"/>
</dbReference>
<dbReference type="HAMAP" id="MF_00539">
    <property type="entry name" value="Ribosomal_bL27"/>
    <property type="match status" value="1"/>
</dbReference>
<dbReference type="InterPro" id="IPR001684">
    <property type="entry name" value="Ribosomal_bL27"/>
</dbReference>
<dbReference type="InterPro" id="IPR018261">
    <property type="entry name" value="Ribosomal_bL27_CS"/>
</dbReference>
<dbReference type="NCBIfam" id="TIGR00062">
    <property type="entry name" value="L27"/>
    <property type="match status" value="1"/>
</dbReference>
<dbReference type="PANTHER" id="PTHR15893:SF0">
    <property type="entry name" value="LARGE RIBOSOMAL SUBUNIT PROTEIN BL27M"/>
    <property type="match status" value="1"/>
</dbReference>
<dbReference type="PANTHER" id="PTHR15893">
    <property type="entry name" value="RIBOSOMAL PROTEIN L27"/>
    <property type="match status" value="1"/>
</dbReference>
<dbReference type="Pfam" id="PF01016">
    <property type="entry name" value="Ribosomal_L27"/>
    <property type="match status" value="1"/>
</dbReference>
<dbReference type="PRINTS" id="PR00063">
    <property type="entry name" value="RIBOSOMALL27"/>
</dbReference>
<dbReference type="SUPFAM" id="SSF110324">
    <property type="entry name" value="Ribosomal L27 protein-like"/>
    <property type="match status" value="1"/>
</dbReference>
<dbReference type="PROSITE" id="PS00831">
    <property type="entry name" value="RIBOSOMAL_L27"/>
    <property type="match status" value="1"/>
</dbReference>
<organism>
    <name type="scientific">Ruminiclostridium cellulolyticum (strain ATCC 35319 / DSM 5812 / JCM 6584 / H10)</name>
    <name type="common">Clostridium cellulolyticum</name>
    <dbReference type="NCBI Taxonomy" id="394503"/>
    <lineage>
        <taxon>Bacteria</taxon>
        <taxon>Bacillati</taxon>
        <taxon>Bacillota</taxon>
        <taxon>Clostridia</taxon>
        <taxon>Eubacteriales</taxon>
        <taxon>Oscillospiraceae</taxon>
        <taxon>Ruminiclostridium</taxon>
    </lineage>
</organism>
<reference key="1">
    <citation type="submission" date="2009-01" db="EMBL/GenBank/DDBJ databases">
        <title>Complete sequence of Clostridium cellulolyticum H10.</title>
        <authorList>
            <consortium name="US DOE Joint Genome Institute"/>
            <person name="Lucas S."/>
            <person name="Copeland A."/>
            <person name="Lapidus A."/>
            <person name="Glavina del Rio T."/>
            <person name="Dalin E."/>
            <person name="Tice H."/>
            <person name="Bruce D."/>
            <person name="Goodwin L."/>
            <person name="Pitluck S."/>
            <person name="Chertkov O."/>
            <person name="Saunders E."/>
            <person name="Brettin T."/>
            <person name="Detter J.C."/>
            <person name="Han C."/>
            <person name="Larimer F."/>
            <person name="Land M."/>
            <person name="Hauser L."/>
            <person name="Kyrpides N."/>
            <person name="Ivanova N."/>
            <person name="Zhou J."/>
            <person name="Richardson P."/>
        </authorList>
    </citation>
    <scope>NUCLEOTIDE SEQUENCE [LARGE SCALE GENOMIC DNA]</scope>
    <source>
        <strain>ATCC 35319 / DSM 5812 / JCM 6584 / H10</strain>
    </source>
</reference>
<keyword id="KW-1185">Reference proteome</keyword>
<keyword id="KW-0687">Ribonucleoprotein</keyword>
<keyword id="KW-0689">Ribosomal protein</keyword>
<proteinExistence type="inferred from homology"/>
<evidence type="ECO:0000250" key="1">
    <source>
        <dbReference type="UniProtKB" id="Q2FXT0"/>
    </source>
</evidence>
<evidence type="ECO:0000255" key="2">
    <source>
        <dbReference type="HAMAP-Rule" id="MF_00539"/>
    </source>
</evidence>
<evidence type="ECO:0000305" key="3"/>
<accession>B8I178</accession>
<gene>
    <name evidence="2" type="primary">rpmA</name>
    <name type="ordered locus">Ccel_1322</name>
</gene>
<name>RL27_RUMCH</name>
<protein>
    <recommendedName>
        <fullName evidence="2">Large ribosomal subunit protein bL27</fullName>
    </recommendedName>
    <alternativeName>
        <fullName evidence="3">50S ribosomal protein L27</fullName>
    </alternativeName>
</protein>